<sequence>MASSMGRFLLFFIALRGFLLEASGDFGSGASRDDDVLLPYSRARARLARDCTRVHAGRLEHHESWPPAAQTAGAHRPSVRTFVSYFADRAVPGHLTRAPEPLRTFSVLEPGGPGGCASKRRATVEETARPSGCTVAQNGGFFRMETGECLGNVVSGGRRVSSAGGLQNAQFGIRRDGTLVTGYLSEEEVLDTENPFVQLLSGVVWLIRNGSIYINESQAAECEETQETGSFNRFVNVISARTAVGHDRKGQLVLLHVDGQTEQRGINLWEMAEFLLKQDVVNAINLDGGGSATFVLNGTLASYPSDHCQDNMWRCPRRVSTVVCVHEPRCQPPDCSGHGTCMEGRCQCTGHFWRGAACDKLDCGPANCSQHGLCTETGCRCEAGWTGSNCSEECPLGWYGPGCQSPCKCEHQCPCDPQTGNCSVNWSPTLSSLFSRVKECFPPPEVTVQAEELSLLTRTTWLAITLALAFLLLISTAANVSLFLGSRAARRRHLDGAYVYHPLQEVNGEHPAAEKEQLGDSSNPFKD</sequence>
<organism>
    <name type="scientific">Bos taurus</name>
    <name type="common">Bovine</name>
    <dbReference type="NCBI Taxonomy" id="9913"/>
    <lineage>
        <taxon>Eukaryota</taxon>
        <taxon>Metazoa</taxon>
        <taxon>Chordata</taxon>
        <taxon>Craniata</taxon>
        <taxon>Vertebrata</taxon>
        <taxon>Euteleostomi</taxon>
        <taxon>Mammalia</taxon>
        <taxon>Eutheria</taxon>
        <taxon>Laurasiatheria</taxon>
        <taxon>Artiodactyla</taxon>
        <taxon>Ruminantia</taxon>
        <taxon>Pecora</taxon>
        <taxon>Bovidae</taxon>
        <taxon>Bovinae</taxon>
        <taxon>Bos</taxon>
    </lineage>
</organism>
<feature type="signal peptide" evidence="1">
    <location>
        <begin position="1"/>
        <end position="25"/>
    </location>
</feature>
<feature type="propeptide" id="PRO_0000424658" description="Removed in mature form" evidence="1">
    <location>
        <begin position="26"/>
        <end position="49"/>
    </location>
</feature>
<feature type="chain" id="PRO_0000096699" description="N-acetylglucosamine-1-phosphodiester alpha-N-acetylglucosaminidase">
    <location>
        <begin position="50"/>
        <end position="527"/>
    </location>
</feature>
<feature type="topological domain" description="Lumenal" evidence="3">
    <location>
        <begin position="50"/>
        <end position="463"/>
    </location>
</feature>
<feature type="transmembrane region" description="Helical" evidence="3">
    <location>
        <begin position="464"/>
        <end position="484"/>
    </location>
</feature>
<feature type="topological domain" description="Cytoplasmic" evidence="3">
    <location>
        <begin position="485"/>
        <end position="527"/>
    </location>
</feature>
<feature type="domain" description="EGF-like">
    <location>
        <begin position="359"/>
        <end position="391"/>
    </location>
</feature>
<feature type="region of interest" description="Mediates the interaction with AP4M1" evidence="2">
    <location>
        <begin position="498"/>
        <end position="505"/>
    </location>
</feature>
<feature type="short sequence motif" description="Tyrosine-based internalization motif">
    <location>
        <begin position="500"/>
        <end position="503"/>
    </location>
</feature>
<feature type="short sequence motif" description="NPF internalization motif">
    <location>
        <begin position="523"/>
        <end position="527"/>
    </location>
</feature>
<feature type="glycosylation site" description="N-linked (GlcNAc...) asparagine" evidence="3">
    <location>
        <position position="209"/>
    </location>
</feature>
<feature type="glycosylation site" description="N-linked (GlcNAc...) asparagine" evidence="3">
    <location>
        <position position="215"/>
    </location>
</feature>
<feature type="glycosylation site" description="N-linked (GlcNAc...) asparagine" evidence="3">
    <location>
        <position position="297"/>
    </location>
</feature>
<feature type="glycosylation site" description="N-linked (GlcNAc...) asparagine" evidence="3">
    <location>
        <position position="367"/>
    </location>
</feature>
<feature type="glycosylation site" description="N-linked (GlcNAc...) asparagine" evidence="3">
    <location>
        <position position="389"/>
    </location>
</feature>
<feature type="glycosylation site" description="N-linked (GlcNAc...) asparagine" evidence="3">
    <location>
        <position position="421"/>
    </location>
</feature>
<feature type="disulfide bond" evidence="1">
    <location>
        <begin position="116"/>
        <end position="149"/>
    </location>
</feature>
<feature type="disulfide bond" evidence="1">
    <location>
        <begin position="133"/>
        <end position="324"/>
    </location>
</feature>
<feature type="disulfide bond" evidence="1">
    <location>
        <begin position="308"/>
        <end position="315"/>
    </location>
</feature>
<feature type="disulfide bond" evidence="1">
    <location>
        <begin position="363"/>
        <end position="374"/>
    </location>
</feature>
<feature type="disulfide bond" evidence="1">
    <location>
        <begin position="381"/>
        <end position="390"/>
    </location>
</feature>
<feature type="sequence conflict" description="In Ref. 2; AA sequence." evidence="5" ref="2">
    <location>
        <position position="62"/>
    </location>
</feature>
<gene>
    <name type="primary">NAGPA</name>
</gene>
<dbReference type="EC" id="3.1.4.45"/>
<dbReference type="SMR" id="P68827"/>
<dbReference type="FunCoup" id="P68827">
    <property type="interactions" value="1299"/>
</dbReference>
<dbReference type="STRING" id="9913.ENSBTAP00000010385"/>
<dbReference type="GlyCosmos" id="P68827">
    <property type="glycosylation" value="6 sites, No reported glycans"/>
</dbReference>
<dbReference type="GlyGen" id="P68827">
    <property type="glycosylation" value="6 sites"/>
</dbReference>
<dbReference type="PaxDb" id="9913-ENSBTAP00000010385"/>
<dbReference type="Ensembl" id="ENSBTAT00000076777.2">
    <property type="protein sequence ID" value="ENSBTAP00000057755.1"/>
    <property type="gene ID" value="ENSBTAG00000007896.7"/>
</dbReference>
<dbReference type="VEuPathDB" id="HostDB:ENSBTAG00000007896"/>
<dbReference type="VGNC" id="VGNC:31870">
    <property type="gene designation" value="NAGPA"/>
</dbReference>
<dbReference type="eggNOG" id="ENOG502QRY5">
    <property type="taxonomic scope" value="Eukaryota"/>
</dbReference>
<dbReference type="GeneTree" id="ENSGT01030000234566"/>
<dbReference type="HOGENOM" id="CLU_031673_1_0_1"/>
<dbReference type="InParanoid" id="P68827"/>
<dbReference type="OrthoDB" id="192253at2759"/>
<dbReference type="UniPathway" id="UPA00378"/>
<dbReference type="Proteomes" id="UP000009136">
    <property type="component" value="Chromosome 25"/>
</dbReference>
<dbReference type="Bgee" id="ENSBTAG00000007896">
    <property type="expression patterns" value="Expressed in monocyte and 103 other cell types or tissues"/>
</dbReference>
<dbReference type="GO" id="GO:0032580">
    <property type="term" value="C:Golgi cisterna membrane"/>
    <property type="evidence" value="ECO:0007669"/>
    <property type="project" value="UniProtKB-SubCell"/>
</dbReference>
<dbReference type="GO" id="GO:0003944">
    <property type="term" value="F:N-acetylglucosamine-1-phosphodiester alpha-N-acetylglucosaminidase activity"/>
    <property type="evidence" value="ECO:0007669"/>
    <property type="project" value="UniProtKB-EC"/>
</dbReference>
<dbReference type="GO" id="GO:0006486">
    <property type="term" value="P:protein glycosylation"/>
    <property type="evidence" value="ECO:0007669"/>
    <property type="project" value="UniProtKB-UniPathway"/>
</dbReference>
<dbReference type="GO" id="GO:0033299">
    <property type="term" value="P:secretion of lysosomal enzymes"/>
    <property type="evidence" value="ECO:0000318"/>
    <property type="project" value="GO_Central"/>
</dbReference>
<dbReference type="Gene3D" id="2.170.300.10">
    <property type="entry name" value="Tie2 ligand-binding domain superfamily"/>
    <property type="match status" value="1"/>
</dbReference>
<dbReference type="InterPro" id="IPR000742">
    <property type="entry name" value="EGF-like_dom"/>
</dbReference>
<dbReference type="InterPro" id="IPR018711">
    <property type="entry name" value="NAGPA"/>
</dbReference>
<dbReference type="PANTHER" id="PTHR40446">
    <property type="entry name" value="N-ACETYLGLUCOSAMINE-1-PHOSPHODIESTER ALPHA-N-ACETYLGLUCOSAMINIDASE"/>
    <property type="match status" value="1"/>
</dbReference>
<dbReference type="PANTHER" id="PTHR40446:SF2">
    <property type="entry name" value="N-ACETYLGLUCOSAMINE-1-PHOSPHODIESTER ALPHA-N-ACETYLGLUCOSAMINIDASE"/>
    <property type="match status" value="1"/>
</dbReference>
<dbReference type="Pfam" id="PF23106">
    <property type="entry name" value="EGF_Teneurin"/>
    <property type="match status" value="1"/>
</dbReference>
<dbReference type="Pfam" id="PF09992">
    <property type="entry name" value="NAGPA"/>
    <property type="match status" value="1"/>
</dbReference>
<dbReference type="PROSITE" id="PS00022">
    <property type="entry name" value="EGF_1"/>
    <property type="match status" value="1"/>
</dbReference>
<dbReference type="PROSITE" id="PS01186">
    <property type="entry name" value="EGF_2"/>
    <property type="match status" value="1"/>
</dbReference>
<comment type="function">
    <text>Catalyzes the second step in the formation of the mannose 6-phosphate targeting signal on lysosomal enzyme oligosaccharides by removing GlcNAc residues from GlcNAc-alpha-P-mannose moieties, which are formed in the first step. Also hydrolyzes UDP-GlcNAc, a sugar donor for Golgi N-acetylglucosaminyltransferases.</text>
</comment>
<comment type="catalytic activity">
    <reaction>
        <text>N(4)-[6-(N-acetyl-alpha-D-glucosaminyl-1-phospho)-alpha-D-mannosyl-(1-&gt;2)-alpha-D-mannosyl-(glycan)]-L-asparaginyl-[protein] + H2O = N(4)-[6-phospho-alpha-D-mannosyl-(1-&gt;2)-alpha-D-mannosyl-(glycan)]-L-asparaginyl-[protein] + N-acetyl-D-glucosamine + H(+)</text>
        <dbReference type="Rhea" id="RHEA:24372"/>
        <dbReference type="Rhea" id="RHEA-COMP:14508"/>
        <dbReference type="Rhea" id="RHEA-COMP:14509"/>
        <dbReference type="ChEBI" id="CHEBI:15377"/>
        <dbReference type="ChEBI" id="CHEBI:15378"/>
        <dbReference type="ChEBI" id="CHEBI:140369"/>
        <dbReference type="ChEBI" id="CHEBI:140371"/>
        <dbReference type="ChEBI" id="CHEBI:506227"/>
        <dbReference type="EC" id="3.1.4.45"/>
    </reaction>
</comment>
<comment type="pathway">
    <text>Protein modification; protein glycosylation.</text>
</comment>
<comment type="subunit">
    <text evidence="2 4">Homotetramer arranged as two disulfide-linked homodimers. Interacts with AP4M1.</text>
</comment>
<comment type="subcellular location">
    <subcellularLocation>
        <location evidence="1">Golgi apparatus</location>
        <location evidence="1">Golgi stack membrane</location>
        <topology evidence="1">Single-pass type I membrane protein</topology>
    </subcellularLocation>
    <subcellularLocation>
        <location evidence="1">Golgi apparatus</location>
        <location evidence="1">trans-Golgi network</location>
    </subcellularLocation>
    <text evidence="1">Cis/medial Golgi.</text>
</comment>
<comment type="PTM">
    <text>Glycosylated. Contains complex N-linked oligosaccharides with appreciable amounts of sialic acid.</text>
</comment>
<comment type="PTM">
    <text evidence="1">The precursor is cleaved and activated in the trans-Golgi network by a furin endopeptidase.</text>
</comment>
<protein>
    <recommendedName>
        <fullName>N-acetylglucosamine-1-phosphodiester alpha-N-acetylglucosaminidase</fullName>
        <ecNumber>3.1.4.45</ecNumber>
    </recommendedName>
    <alternativeName>
        <fullName>Mannose 6-phosphate-uncovering enzyme</fullName>
    </alternativeName>
    <alternativeName>
        <fullName>Phosphodiester alpha-GlcNAcase</fullName>
    </alternativeName>
</protein>
<accession>P68827</accession>
<keyword id="KW-0903">Direct protein sequencing</keyword>
<keyword id="KW-1015">Disulfide bond</keyword>
<keyword id="KW-0245">EGF-like domain</keyword>
<keyword id="KW-0325">Glycoprotein</keyword>
<keyword id="KW-0333">Golgi apparatus</keyword>
<keyword id="KW-0378">Hydrolase</keyword>
<keyword id="KW-0472">Membrane</keyword>
<keyword id="KW-1185">Reference proteome</keyword>
<keyword id="KW-0730">Sialic acid</keyword>
<keyword id="KW-0732">Signal</keyword>
<keyword id="KW-0812">Transmembrane</keyword>
<keyword id="KW-1133">Transmembrane helix</keyword>
<keyword id="KW-0865">Zymogen</keyword>
<name>NAGPA_BOVIN</name>
<reference key="1">
    <citation type="journal article" date="2009" name="Science">
        <title>The genome sequence of taurine cattle: a window to ruminant biology and evolution.</title>
        <authorList>
            <consortium name="The bovine genome sequencing and analysis consortium"/>
        </authorList>
    </citation>
    <scope>NUCLEOTIDE SEQUENCE [LARGE SCALE GENOMIC DNA]</scope>
    <source>
        <strain>Hereford</strain>
    </source>
</reference>
<reference key="2">
    <citation type="journal article" date="1998" name="J. Biol. Chem.">
        <title>Purification and multimeric structure of bovine N-acetylglucosamine-1-phosphodiester alpha-N-acetylglucosaminidase.</title>
        <authorList>
            <person name="Kornfeld R.H."/>
            <person name="Bao M."/>
            <person name="Brewer K."/>
            <person name="Noll C."/>
            <person name="Canfield W.M."/>
        </authorList>
    </citation>
    <scope>PROTEIN SEQUENCE OF 50-83</scope>
    <scope>SUBCELLULAR LOCATION</scope>
    <scope>HOMOTETRAMERIZATION</scope>
    <source>
        <tissue>Liver</tissue>
    </source>
</reference>
<reference key="3">
    <citation type="journal article" date="1994" name="J. Biol. Chem.">
        <title>Purification and kinetic parameters of bovine liver N-acetylglucosamine-1-phosphodiester alpha-N-acetylglucosaminidase.</title>
        <authorList>
            <person name="Mullis K.G."/>
            <person name="Huynh M."/>
            <person name="Kornfeld R.H."/>
        </authorList>
    </citation>
    <scope>CHARACTERIZATION</scope>
    <source>
        <tissue>Liver</tissue>
    </source>
</reference>
<reference key="4">
    <citation type="journal article" date="1994" name="J. Biol. Chem.">
        <title>Characterization and immunolocalization of bovine N-acetylglucosamine-1-phosphodiester alpha-N-acetylglucosaminidase.</title>
        <authorList>
            <person name="Mullis K.G."/>
            <person name="Kornfeld R.H."/>
        </authorList>
    </citation>
    <scope>CHARACTERIZATION</scope>
    <scope>SUBUNIT</scope>
    <scope>SIALIC ACID</scope>
    <scope>SUBCELLULAR LOCATION</scope>
    <source>
        <tissue>Liver</tissue>
    </source>
</reference>
<evidence type="ECO:0000250" key="1"/>
<evidence type="ECO:0000250" key="2">
    <source>
        <dbReference type="UniProtKB" id="Q9UK23"/>
    </source>
</evidence>
<evidence type="ECO:0000255" key="3"/>
<evidence type="ECO:0000269" key="4">
    <source>
    </source>
</evidence>
<evidence type="ECO:0000305" key="5"/>
<proteinExistence type="evidence at protein level"/>